<feature type="chain" id="PRO_0000145933" description="Phosphoglycerate kinase">
    <location>
        <begin position="1"/>
        <end position="397"/>
    </location>
</feature>
<feature type="binding site" evidence="1">
    <location>
        <begin position="23"/>
        <end position="25"/>
    </location>
    <ligand>
        <name>substrate</name>
    </ligand>
</feature>
<feature type="binding site" evidence="1">
    <location>
        <position position="38"/>
    </location>
    <ligand>
        <name>substrate</name>
    </ligand>
</feature>
<feature type="binding site" evidence="1">
    <location>
        <begin position="61"/>
        <end position="64"/>
    </location>
    <ligand>
        <name>substrate</name>
    </ligand>
</feature>
<feature type="binding site" evidence="1">
    <location>
        <position position="122"/>
    </location>
    <ligand>
        <name>substrate</name>
    </ligand>
</feature>
<feature type="binding site" evidence="1">
    <location>
        <position position="155"/>
    </location>
    <ligand>
        <name>substrate</name>
    </ligand>
</feature>
<feature type="binding site" evidence="1">
    <location>
        <position position="206"/>
    </location>
    <ligand>
        <name>ATP</name>
        <dbReference type="ChEBI" id="CHEBI:30616"/>
    </ligand>
</feature>
<feature type="binding site" evidence="1">
    <location>
        <position position="296"/>
    </location>
    <ligand>
        <name>ATP</name>
        <dbReference type="ChEBI" id="CHEBI:30616"/>
    </ligand>
</feature>
<feature type="binding site" evidence="1">
    <location>
        <position position="327"/>
    </location>
    <ligand>
        <name>ATP</name>
        <dbReference type="ChEBI" id="CHEBI:30616"/>
    </ligand>
</feature>
<feature type="binding site" evidence="1">
    <location>
        <begin position="353"/>
        <end position="356"/>
    </location>
    <ligand>
        <name>ATP</name>
        <dbReference type="ChEBI" id="CHEBI:30616"/>
    </ligand>
</feature>
<proteinExistence type="inferred from homology"/>
<comment type="catalytic activity">
    <reaction evidence="1">
        <text>(2R)-3-phosphoglycerate + ATP = (2R)-3-phospho-glyceroyl phosphate + ADP</text>
        <dbReference type="Rhea" id="RHEA:14801"/>
        <dbReference type="ChEBI" id="CHEBI:30616"/>
        <dbReference type="ChEBI" id="CHEBI:57604"/>
        <dbReference type="ChEBI" id="CHEBI:58272"/>
        <dbReference type="ChEBI" id="CHEBI:456216"/>
        <dbReference type="EC" id="2.7.2.3"/>
    </reaction>
</comment>
<comment type="pathway">
    <text evidence="1">Carbohydrate degradation; glycolysis; pyruvate from D-glyceraldehyde 3-phosphate: step 2/5.</text>
</comment>
<comment type="subunit">
    <text evidence="1">Monomer.</text>
</comment>
<comment type="subcellular location">
    <subcellularLocation>
        <location evidence="1">Cytoplasm</location>
    </subcellularLocation>
</comment>
<comment type="similarity">
    <text evidence="1">Belongs to the phosphoglycerate kinase family.</text>
</comment>
<dbReference type="EC" id="2.7.2.3" evidence="1"/>
<dbReference type="EMBL" id="BA000016">
    <property type="protein sequence ID" value="BAB81009.1"/>
    <property type="molecule type" value="Genomic_DNA"/>
</dbReference>
<dbReference type="RefSeq" id="WP_003450483.1">
    <property type="nucleotide sequence ID" value="NC_003366.1"/>
</dbReference>
<dbReference type="SMR" id="Q8XKU0"/>
<dbReference type="STRING" id="195102.gene:10490566"/>
<dbReference type="KEGG" id="cpe:CPE1303"/>
<dbReference type="HOGENOM" id="CLU_025427_0_2_9"/>
<dbReference type="UniPathway" id="UPA00109">
    <property type="reaction ID" value="UER00185"/>
</dbReference>
<dbReference type="Proteomes" id="UP000000818">
    <property type="component" value="Chromosome"/>
</dbReference>
<dbReference type="GO" id="GO:0005829">
    <property type="term" value="C:cytosol"/>
    <property type="evidence" value="ECO:0007669"/>
    <property type="project" value="TreeGrafter"/>
</dbReference>
<dbReference type="GO" id="GO:0043531">
    <property type="term" value="F:ADP binding"/>
    <property type="evidence" value="ECO:0007669"/>
    <property type="project" value="TreeGrafter"/>
</dbReference>
<dbReference type="GO" id="GO:0005524">
    <property type="term" value="F:ATP binding"/>
    <property type="evidence" value="ECO:0007669"/>
    <property type="project" value="UniProtKB-KW"/>
</dbReference>
<dbReference type="GO" id="GO:0004618">
    <property type="term" value="F:phosphoglycerate kinase activity"/>
    <property type="evidence" value="ECO:0007669"/>
    <property type="project" value="UniProtKB-UniRule"/>
</dbReference>
<dbReference type="GO" id="GO:0006094">
    <property type="term" value="P:gluconeogenesis"/>
    <property type="evidence" value="ECO:0007669"/>
    <property type="project" value="TreeGrafter"/>
</dbReference>
<dbReference type="GO" id="GO:0006096">
    <property type="term" value="P:glycolytic process"/>
    <property type="evidence" value="ECO:0007669"/>
    <property type="project" value="UniProtKB-UniRule"/>
</dbReference>
<dbReference type="CDD" id="cd00318">
    <property type="entry name" value="Phosphoglycerate_kinase"/>
    <property type="match status" value="1"/>
</dbReference>
<dbReference type="FunFam" id="3.40.50.1260:FF:000007">
    <property type="entry name" value="Phosphoglycerate kinase"/>
    <property type="match status" value="1"/>
</dbReference>
<dbReference type="FunFam" id="3.40.50.1260:FF:000008">
    <property type="entry name" value="Phosphoglycerate kinase"/>
    <property type="match status" value="1"/>
</dbReference>
<dbReference type="Gene3D" id="3.40.50.1260">
    <property type="entry name" value="Phosphoglycerate kinase, N-terminal domain"/>
    <property type="match status" value="2"/>
</dbReference>
<dbReference type="HAMAP" id="MF_00145">
    <property type="entry name" value="Phosphoglyc_kinase"/>
    <property type="match status" value="1"/>
</dbReference>
<dbReference type="InterPro" id="IPR001576">
    <property type="entry name" value="Phosphoglycerate_kinase"/>
</dbReference>
<dbReference type="InterPro" id="IPR015911">
    <property type="entry name" value="Phosphoglycerate_kinase_CS"/>
</dbReference>
<dbReference type="InterPro" id="IPR015824">
    <property type="entry name" value="Phosphoglycerate_kinase_N"/>
</dbReference>
<dbReference type="InterPro" id="IPR036043">
    <property type="entry name" value="Phosphoglycerate_kinase_sf"/>
</dbReference>
<dbReference type="PANTHER" id="PTHR11406">
    <property type="entry name" value="PHOSPHOGLYCERATE KINASE"/>
    <property type="match status" value="1"/>
</dbReference>
<dbReference type="PANTHER" id="PTHR11406:SF23">
    <property type="entry name" value="PHOSPHOGLYCERATE KINASE 1, CHLOROPLASTIC-RELATED"/>
    <property type="match status" value="1"/>
</dbReference>
<dbReference type="Pfam" id="PF00162">
    <property type="entry name" value="PGK"/>
    <property type="match status" value="1"/>
</dbReference>
<dbReference type="PIRSF" id="PIRSF000724">
    <property type="entry name" value="Pgk"/>
    <property type="match status" value="1"/>
</dbReference>
<dbReference type="PRINTS" id="PR00477">
    <property type="entry name" value="PHGLYCKINASE"/>
</dbReference>
<dbReference type="SUPFAM" id="SSF53748">
    <property type="entry name" value="Phosphoglycerate kinase"/>
    <property type="match status" value="1"/>
</dbReference>
<dbReference type="PROSITE" id="PS00111">
    <property type="entry name" value="PGLYCERATE_KINASE"/>
    <property type="match status" value="1"/>
</dbReference>
<organism>
    <name type="scientific">Clostridium perfringens (strain 13 / Type A)</name>
    <dbReference type="NCBI Taxonomy" id="195102"/>
    <lineage>
        <taxon>Bacteria</taxon>
        <taxon>Bacillati</taxon>
        <taxon>Bacillota</taxon>
        <taxon>Clostridia</taxon>
        <taxon>Eubacteriales</taxon>
        <taxon>Clostridiaceae</taxon>
        <taxon>Clostridium</taxon>
    </lineage>
</organism>
<gene>
    <name evidence="1" type="primary">pgk</name>
    <name type="ordered locus">CPE1303</name>
</gene>
<evidence type="ECO:0000255" key="1">
    <source>
        <dbReference type="HAMAP-Rule" id="MF_00145"/>
    </source>
</evidence>
<protein>
    <recommendedName>
        <fullName evidence="1">Phosphoglycerate kinase</fullName>
        <ecNumber evidence="1">2.7.2.3</ecNumber>
    </recommendedName>
</protein>
<sequence>MNFNKKTIEDVQVKGKKVLVRCDFNVPLKDGVITDENRLNGAMPTIKYLVDNGAKVILCSHMGKPKGEAKPEFSLAPVAKRLSEMLGKEVVFAADDNVVGENAKKAVAEMKDGDVVLLQNTRYRKEETKNGEELSKELASLAEMFVNDAFGTAHRAHCSTVGVTEYLKPAVCGYLIQKELKFLGDAVETPERPFVAILGGAKVSDKINVINNLLEKVDTLIIGGGMAYTFLKAQGYTVGSSLVEEDKVEYAKEMLAKAEEKGVKLLLPVDHRVAKEFKDVEAVVTEDQNIAEGFMGLDIGPKTEAIYAEAIKDAKTVIWNGPMGVFEFENFNKGTIAVAKAMAEADATTIIGGGDSAAAVNILGFGDKMSHISTGGGASLEFLEGKVLPGIAALNDK</sequence>
<name>PGK_CLOPE</name>
<reference key="1">
    <citation type="journal article" date="2002" name="Proc. Natl. Acad. Sci. U.S.A.">
        <title>Complete genome sequence of Clostridium perfringens, an anaerobic flesh-eater.</title>
        <authorList>
            <person name="Shimizu T."/>
            <person name="Ohtani K."/>
            <person name="Hirakawa H."/>
            <person name="Ohshima K."/>
            <person name="Yamashita A."/>
            <person name="Shiba T."/>
            <person name="Ogasawara N."/>
            <person name="Hattori M."/>
            <person name="Kuhara S."/>
            <person name="Hayashi H."/>
        </authorList>
    </citation>
    <scope>NUCLEOTIDE SEQUENCE [LARGE SCALE GENOMIC DNA]</scope>
    <source>
        <strain>13 / Type A</strain>
    </source>
</reference>
<accession>Q8XKU0</accession>
<keyword id="KW-0067">ATP-binding</keyword>
<keyword id="KW-0963">Cytoplasm</keyword>
<keyword id="KW-0324">Glycolysis</keyword>
<keyword id="KW-0418">Kinase</keyword>
<keyword id="KW-0547">Nucleotide-binding</keyword>
<keyword id="KW-1185">Reference proteome</keyword>
<keyword id="KW-0808">Transferase</keyword>